<feature type="chain" id="PRO_0000211346" description="Probable transposase for insertion sequence element">
    <location>
        <begin position="1"/>
        <end position="343"/>
    </location>
</feature>
<comment type="function">
    <text>Required for the transposition of the insertion element.</text>
</comment>
<comment type="similarity">
    <text evidence="1">Belongs to the transposase mutator family.</text>
</comment>
<comment type="caution">
    <text evidence="1">It is uncertain whether Met-1 is the initiator.</text>
</comment>
<keyword id="KW-0233">DNA recombination</keyword>
<keyword id="KW-0238">DNA-binding</keyword>
<keyword id="KW-0814">Transposable element</keyword>
<keyword id="KW-0815">Transposition</keyword>
<sequence>MPRDRAGTFTPRMLPKGTRRLTELDDMIISLYAGGMTVRDIQHHLATTLSMDMSPDTISTITDAVLEEVMIWQNRQLDEFYPVIFLDALRVKIRDGHRVVNKSCYMAVGVDMDGIKHILGLWIADNEGASFWASVCADLANRGVQDAFIVCCDGLKGLPEAVEATWPNSMVQTCIVHLIRAANRWVSYQDRKPVSSALREVYTAPTEDTARAALDAFEASELGRKYPQSVKVWRDAWDRFVPFLQFPPAARRVLYTTNSIESLNAELRKATRNRGQFPNDTAALKTLWLMICNIEDKRAAQRAKKAKRAIECNGYIEGAKATGWKQAINQLAVAYPDRFADYL</sequence>
<dbReference type="EMBL" id="A07012">
    <property type="status" value="NOT_ANNOTATED_CDS"/>
    <property type="molecule type" value="Unassigned_DNA"/>
</dbReference>
<dbReference type="SMR" id="P35879"/>
<dbReference type="GO" id="GO:0003677">
    <property type="term" value="F:DNA binding"/>
    <property type="evidence" value="ECO:0007669"/>
    <property type="project" value="UniProtKB-KW"/>
</dbReference>
<dbReference type="GO" id="GO:0004803">
    <property type="term" value="F:transposase activity"/>
    <property type="evidence" value="ECO:0007669"/>
    <property type="project" value="InterPro"/>
</dbReference>
<dbReference type="GO" id="GO:0006313">
    <property type="term" value="P:DNA transposition"/>
    <property type="evidence" value="ECO:0007669"/>
    <property type="project" value="InterPro"/>
</dbReference>
<dbReference type="InterPro" id="IPR001207">
    <property type="entry name" value="Transposase_mutator"/>
</dbReference>
<dbReference type="NCBIfam" id="NF033543">
    <property type="entry name" value="transpos_IS256"/>
    <property type="match status" value="1"/>
</dbReference>
<dbReference type="PANTHER" id="PTHR33217:SF8">
    <property type="entry name" value="MUTATOR FAMILY TRANSPOSASE"/>
    <property type="match status" value="1"/>
</dbReference>
<dbReference type="PANTHER" id="PTHR33217">
    <property type="entry name" value="TRANSPOSASE FOR INSERTION SEQUENCE ELEMENT IS1081"/>
    <property type="match status" value="1"/>
</dbReference>
<dbReference type="Pfam" id="PF00872">
    <property type="entry name" value="Transposase_mut"/>
    <property type="match status" value="1"/>
</dbReference>
<dbReference type="PROSITE" id="PS01007">
    <property type="entry name" value="TRANSPOSASE_MUTATOR"/>
    <property type="match status" value="1"/>
</dbReference>
<evidence type="ECO:0000305" key="1"/>
<name>TRA_CORDP</name>
<organism>
    <name type="scientific">Corynebacterium diphtheriae</name>
    <dbReference type="NCBI Taxonomy" id="1717"/>
    <lineage>
        <taxon>Bacteria</taxon>
        <taxon>Bacillati</taxon>
        <taxon>Actinomycetota</taxon>
        <taxon>Actinomycetes</taxon>
        <taxon>Mycobacteriales</taxon>
        <taxon>Corynebacteriaceae</taxon>
        <taxon>Corynebacterium</taxon>
    </lineage>
</organism>
<proteinExistence type="inferred from homology"/>
<reference key="1">
    <citation type="patent" date="1988-01-13" number="EP0252558">
        <title>Element of DNA of Corynebacterium diphteriae with typical properties of an IS insertion element.</title>
        <authorList>
            <person name="Rappuoli R."/>
            <person name="Perugini M."/>
            <person name="Ratti G."/>
        </authorList>
    </citation>
    <scope>NUCLEOTIDE SEQUENCE [GENOMIC DNA]</scope>
</reference>
<protein>
    <recommendedName>
        <fullName>Probable transposase for insertion sequence element</fullName>
    </recommendedName>
</protein>
<accession>P35879</accession>